<dbReference type="EC" id="3.1.-.-" evidence="1"/>
<dbReference type="EMBL" id="CR626927">
    <property type="protein sequence ID" value="CAH07390.1"/>
    <property type="molecule type" value="Genomic_DNA"/>
</dbReference>
<dbReference type="SMR" id="Q5LER0"/>
<dbReference type="PaxDb" id="272559-BF9343_1609"/>
<dbReference type="KEGG" id="bfs:BF9343_1609"/>
<dbReference type="eggNOG" id="COG0816">
    <property type="taxonomic scope" value="Bacteria"/>
</dbReference>
<dbReference type="HOGENOM" id="CLU_098240_2_1_10"/>
<dbReference type="Proteomes" id="UP000006731">
    <property type="component" value="Chromosome"/>
</dbReference>
<dbReference type="GO" id="GO:0005829">
    <property type="term" value="C:cytosol"/>
    <property type="evidence" value="ECO:0007669"/>
    <property type="project" value="TreeGrafter"/>
</dbReference>
<dbReference type="GO" id="GO:0004518">
    <property type="term" value="F:nuclease activity"/>
    <property type="evidence" value="ECO:0007669"/>
    <property type="project" value="UniProtKB-KW"/>
</dbReference>
<dbReference type="GO" id="GO:0000967">
    <property type="term" value="P:rRNA 5'-end processing"/>
    <property type="evidence" value="ECO:0007669"/>
    <property type="project" value="UniProtKB-UniRule"/>
</dbReference>
<dbReference type="CDD" id="cd16964">
    <property type="entry name" value="YqgF"/>
    <property type="match status" value="1"/>
</dbReference>
<dbReference type="Gene3D" id="3.30.420.140">
    <property type="entry name" value="YqgF/RNase H-like domain"/>
    <property type="match status" value="1"/>
</dbReference>
<dbReference type="HAMAP" id="MF_00651">
    <property type="entry name" value="Nuclease_YqgF"/>
    <property type="match status" value="1"/>
</dbReference>
<dbReference type="InterPro" id="IPR012337">
    <property type="entry name" value="RNaseH-like_sf"/>
</dbReference>
<dbReference type="InterPro" id="IPR005227">
    <property type="entry name" value="YqgF"/>
</dbReference>
<dbReference type="InterPro" id="IPR006641">
    <property type="entry name" value="YqgF/RNaseH-like_dom"/>
</dbReference>
<dbReference type="InterPro" id="IPR037027">
    <property type="entry name" value="YqgF/RNaseH-like_dom_sf"/>
</dbReference>
<dbReference type="NCBIfam" id="TIGR00250">
    <property type="entry name" value="RNAse_H_YqgF"/>
    <property type="match status" value="1"/>
</dbReference>
<dbReference type="PANTHER" id="PTHR33317">
    <property type="entry name" value="POLYNUCLEOTIDYL TRANSFERASE, RIBONUCLEASE H-LIKE SUPERFAMILY PROTEIN"/>
    <property type="match status" value="1"/>
</dbReference>
<dbReference type="PANTHER" id="PTHR33317:SF4">
    <property type="entry name" value="POLYNUCLEOTIDYL TRANSFERASE, RIBONUCLEASE H-LIKE SUPERFAMILY PROTEIN"/>
    <property type="match status" value="1"/>
</dbReference>
<dbReference type="Pfam" id="PF03652">
    <property type="entry name" value="RuvX"/>
    <property type="match status" value="1"/>
</dbReference>
<dbReference type="SMART" id="SM00732">
    <property type="entry name" value="YqgFc"/>
    <property type="match status" value="1"/>
</dbReference>
<dbReference type="SUPFAM" id="SSF53098">
    <property type="entry name" value="Ribonuclease H-like"/>
    <property type="match status" value="1"/>
</dbReference>
<protein>
    <recommendedName>
        <fullName evidence="1">Putative pre-16S rRNA nuclease</fullName>
        <ecNumber evidence="1">3.1.-.-</ecNumber>
    </recommendedName>
</protein>
<sequence length="138" mass="15819">MSRIVAIDYGRKRTGIAVSDTMQIIANGLTTVPTHELLDFITNYVKQESVERIIIGLPKQMNNEVSENMKNIEPFVRSLKKRLPDMPVEYVDERFTSVLAHRTMLEAGLKKKDRQNKALVDEISATIILQSYLETKRL</sequence>
<reference key="1">
    <citation type="journal article" date="2005" name="Science">
        <title>Extensive DNA inversions in the B. fragilis genome control variable gene expression.</title>
        <authorList>
            <person name="Cerdeno-Tarraga A.-M."/>
            <person name="Patrick S."/>
            <person name="Crossman L.C."/>
            <person name="Blakely G."/>
            <person name="Abratt V."/>
            <person name="Lennard N."/>
            <person name="Poxton I."/>
            <person name="Duerden B."/>
            <person name="Harris B."/>
            <person name="Quail M.A."/>
            <person name="Barron A."/>
            <person name="Clark L."/>
            <person name="Corton C."/>
            <person name="Doggett J."/>
            <person name="Holden M.T.G."/>
            <person name="Larke N."/>
            <person name="Line A."/>
            <person name="Lord A."/>
            <person name="Norbertczak H."/>
            <person name="Ormond D."/>
            <person name="Price C."/>
            <person name="Rabbinowitsch E."/>
            <person name="Woodward J."/>
            <person name="Barrell B.G."/>
            <person name="Parkhill J."/>
        </authorList>
    </citation>
    <scope>NUCLEOTIDE SEQUENCE [LARGE SCALE GENOMIC DNA]</scope>
    <source>
        <strain>ATCC 25285 / DSM 2151 / CCUG 4856 / JCM 11019 / LMG 10263 / NCTC 9343 / Onslow / VPI 2553 / EN-2</strain>
    </source>
</reference>
<keyword id="KW-0963">Cytoplasm</keyword>
<keyword id="KW-0378">Hydrolase</keyword>
<keyword id="KW-0540">Nuclease</keyword>
<keyword id="KW-0690">Ribosome biogenesis</keyword>
<evidence type="ECO:0000255" key="1">
    <source>
        <dbReference type="HAMAP-Rule" id="MF_00651"/>
    </source>
</evidence>
<organism>
    <name type="scientific">Bacteroides fragilis (strain ATCC 25285 / DSM 2151 / CCUG 4856 / JCM 11019 / LMG 10263 / NCTC 9343 / Onslow / VPI 2553 / EN-2)</name>
    <dbReference type="NCBI Taxonomy" id="272559"/>
    <lineage>
        <taxon>Bacteria</taxon>
        <taxon>Pseudomonadati</taxon>
        <taxon>Bacteroidota</taxon>
        <taxon>Bacteroidia</taxon>
        <taxon>Bacteroidales</taxon>
        <taxon>Bacteroidaceae</taxon>
        <taxon>Bacteroides</taxon>
    </lineage>
</organism>
<gene>
    <name type="ordered locus">BF1690</name>
</gene>
<name>YQGF_BACFN</name>
<feature type="chain" id="PRO_0000257504" description="Putative pre-16S rRNA nuclease">
    <location>
        <begin position="1"/>
        <end position="138"/>
    </location>
</feature>
<proteinExistence type="inferred from homology"/>
<comment type="function">
    <text evidence="1">Could be a nuclease involved in processing of the 5'-end of pre-16S rRNA.</text>
</comment>
<comment type="subcellular location">
    <subcellularLocation>
        <location evidence="1">Cytoplasm</location>
    </subcellularLocation>
</comment>
<comment type="similarity">
    <text evidence="1">Belongs to the YqgF nuclease family.</text>
</comment>
<accession>Q5LER0</accession>